<dbReference type="EC" id="2.1.2.9" evidence="1"/>
<dbReference type="EMBL" id="CP000084">
    <property type="protein sequence ID" value="AAZ21279.1"/>
    <property type="molecule type" value="Genomic_DNA"/>
</dbReference>
<dbReference type="RefSeq" id="WP_011281725.1">
    <property type="nucleotide sequence ID" value="NC_007205.1"/>
</dbReference>
<dbReference type="SMR" id="Q4FNG0"/>
<dbReference type="STRING" id="335992.SAR11_0457"/>
<dbReference type="GeneID" id="66294956"/>
<dbReference type="KEGG" id="pub:SAR11_0457"/>
<dbReference type="eggNOG" id="COG0223">
    <property type="taxonomic scope" value="Bacteria"/>
</dbReference>
<dbReference type="HOGENOM" id="CLU_033347_1_2_5"/>
<dbReference type="OrthoDB" id="9802815at2"/>
<dbReference type="Proteomes" id="UP000002528">
    <property type="component" value="Chromosome"/>
</dbReference>
<dbReference type="GO" id="GO:0005829">
    <property type="term" value="C:cytosol"/>
    <property type="evidence" value="ECO:0007669"/>
    <property type="project" value="TreeGrafter"/>
</dbReference>
<dbReference type="GO" id="GO:0004479">
    <property type="term" value="F:methionyl-tRNA formyltransferase activity"/>
    <property type="evidence" value="ECO:0007669"/>
    <property type="project" value="UniProtKB-UniRule"/>
</dbReference>
<dbReference type="CDD" id="cd08646">
    <property type="entry name" value="FMT_core_Met-tRNA-FMT_N"/>
    <property type="match status" value="1"/>
</dbReference>
<dbReference type="CDD" id="cd08704">
    <property type="entry name" value="Met_tRNA_FMT_C"/>
    <property type="match status" value="1"/>
</dbReference>
<dbReference type="Gene3D" id="3.40.50.12230">
    <property type="match status" value="1"/>
</dbReference>
<dbReference type="HAMAP" id="MF_00182">
    <property type="entry name" value="Formyl_trans"/>
    <property type="match status" value="1"/>
</dbReference>
<dbReference type="InterPro" id="IPR005794">
    <property type="entry name" value="Fmt"/>
</dbReference>
<dbReference type="InterPro" id="IPR005793">
    <property type="entry name" value="Formyl_trans_C"/>
</dbReference>
<dbReference type="InterPro" id="IPR002376">
    <property type="entry name" value="Formyl_transf_N"/>
</dbReference>
<dbReference type="InterPro" id="IPR036477">
    <property type="entry name" value="Formyl_transf_N_sf"/>
</dbReference>
<dbReference type="InterPro" id="IPR011034">
    <property type="entry name" value="Formyl_transferase-like_C_sf"/>
</dbReference>
<dbReference type="InterPro" id="IPR044135">
    <property type="entry name" value="Met-tRNA-FMT_C"/>
</dbReference>
<dbReference type="InterPro" id="IPR041711">
    <property type="entry name" value="Met-tRNA-FMT_N"/>
</dbReference>
<dbReference type="NCBIfam" id="TIGR00460">
    <property type="entry name" value="fmt"/>
    <property type="match status" value="1"/>
</dbReference>
<dbReference type="PANTHER" id="PTHR11138">
    <property type="entry name" value="METHIONYL-TRNA FORMYLTRANSFERASE"/>
    <property type="match status" value="1"/>
</dbReference>
<dbReference type="PANTHER" id="PTHR11138:SF5">
    <property type="entry name" value="METHIONYL-TRNA FORMYLTRANSFERASE, MITOCHONDRIAL"/>
    <property type="match status" value="1"/>
</dbReference>
<dbReference type="Pfam" id="PF02911">
    <property type="entry name" value="Formyl_trans_C"/>
    <property type="match status" value="1"/>
</dbReference>
<dbReference type="Pfam" id="PF00551">
    <property type="entry name" value="Formyl_trans_N"/>
    <property type="match status" value="1"/>
</dbReference>
<dbReference type="SUPFAM" id="SSF50486">
    <property type="entry name" value="FMT C-terminal domain-like"/>
    <property type="match status" value="1"/>
</dbReference>
<dbReference type="SUPFAM" id="SSF53328">
    <property type="entry name" value="Formyltransferase"/>
    <property type="match status" value="1"/>
</dbReference>
<comment type="function">
    <text evidence="1">Attaches a formyl group to the free amino group of methionyl-tRNA(fMet). The formyl group appears to play a dual role in the initiator identity of N-formylmethionyl-tRNA by promoting its recognition by IF2 and preventing the misappropriation of this tRNA by the elongation apparatus.</text>
</comment>
<comment type="catalytic activity">
    <reaction evidence="1">
        <text>L-methionyl-tRNA(fMet) + (6R)-10-formyltetrahydrofolate = N-formyl-L-methionyl-tRNA(fMet) + (6S)-5,6,7,8-tetrahydrofolate + H(+)</text>
        <dbReference type="Rhea" id="RHEA:24380"/>
        <dbReference type="Rhea" id="RHEA-COMP:9952"/>
        <dbReference type="Rhea" id="RHEA-COMP:9953"/>
        <dbReference type="ChEBI" id="CHEBI:15378"/>
        <dbReference type="ChEBI" id="CHEBI:57453"/>
        <dbReference type="ChEBI" id="CHEBI:78530"/>
        <dbReference type="ChEBI" id="CHEBI:78844"/>
        <dbReference type="ChEBI" id="CHEBI:195366"/>
        <dbReference type="EC" id="2.1.2.9"/>
    </reaction>
</comment>
<comment type="similarity">
    <text evidence="1">Belongs to the Fmt family.</text>
</comment>
<keyword id="KW-0648">Protein biosynthesis</keyword>
<keyword id="KW-1185">Reference proteome</keyword>
<keyword id="KW-0808">Transferase</keyword>
<organism>
    <name type="scientific">Pelagibacter ubique (strain HTCC1062)</name>
    <dbReference type="NCBI Taxonomy" id="335992"/>
    <lineage>
        <taxon>Bacteria</taxon>
        <taxon>Pseudomonadati</taxon>
        <taxon>Pseudomonadota</taxon>
        <taxon>Alphaproteobacteria</taxon>
        <taxon>Candidatus Pelagibacterales</taxon>
        <taxon>Candidatus Pelagibacteraceae</taxon>
        <taxon>Candidatus Pelagibacter</taxon>
    </lineage>
</organism>
<name>FMT_PELUB</name>
<gene>
    <name evidence="1" type="primary">fmt</name>
    <name type="ordered locus">SAR11_0457</name>
</gene>
<accession>Q4FNG0</accession>
<evidence type="ECO:0000255" key="1">
    <source>
        <dbReference type="HAMAP-Rule" id="MF_00182"/>
    </source>
</evidence>
<feature type="chain" id="PRO_1000020121" description="Methionyl-tRNA formyltransferase">
    <location>
        <begin position="1"/>
        <end position="310"/>
    </location>
</feature>
<feature type="binding site" evidence="1">
    <location>
        <begin position="112"/>
        <end position="115"/>
    </location>
    <ligand>
        <name>(6S)-5,6,7,8-tetrahydrofolate</name>
        <dbReference type="ChEBI" id="CHEBI:57453"/>
    </ligand>
</feature>
<proteinExistence type="inferred from homology"/>
<sequence length="310" mass="34970">MTKKIVFMGTPFFAVPILKSLYEKNYIIPAVYTQPPKKSQRGQKINKSPIQIVAEDYNIDCRTPDTLKTNKEEYEYLKQLDLDLVIVVAYGQIIPKEYLNLAKKGFINIHASLLPKWRGAAPIQRSIMNLEKETGISIMKIGEKLDTGPVGNIYRIKIKDSDNAETISTKLSILASEKIIENVENIFEDKLTFKEQDDTSATYASKIEKSEGEIKWNDNAESIIGKINGLYPSPGAFFIFKDERYKILKAELGNKSGEIGEVMSNDLEISCGNQKSIKIIEIQRQGKKPQNINEFVLGSQIIKGSRITNV</sequence>
<protein>
    <recommendedName>
        <fullName evidence="1">Methionyl-tRNA formyltransferase</fullName>
        <ecNumber evidence="1">2.1.2.9</ecNumber>
    </recommendedName>
</protein>
<reference key="1">
    <citation type="journal article" date="2005" name="Science">
        <title>Genome streamlining in a cosmopolitan oceanic bacterium.</title>
        <authorList>
            <person name="Giovannoni S.J."/>
            <person name="Tripp H.J."/>
            <person name="Givan S."/>
            <person name="Podar M."/>
            <person name="Vergin K.L."/>
            <person name="Baptista D."/>
            <person name="Bibbs L."/>
            <person name="Eads J."/>
            <person name="Richardson T.H."/>
            <person name="Noordewier M."/>
            <person name="Rappe M.S."/>
            <person name="Short J.M."/>
            <person name="Carrington J.C."/>
            <person name="Mathur E.J."/>
        </authorList>
    </citation>
    <scope>NUCLEOTIDE SEQUENCE [LARGE SCALE GENOMIC DNA]</scope>
    <source>
        <strain>HTCC1062</strain>
    </source>
</reference>